<proteinExistence type="inferred from homology"/>
<comment type="function">
    <text evidence="1">Isomerase that catalyzes the conversion of deoxy-ribose 1-phosphate (dRib-1-P) and ribose 1-phosphate (Rib-1-P) to deoxy-ribose 5-phosphate (dRib-5-P) and ribose 5-phosphate (Rib-5-P), respectively.</text>
</comment>
<comment type="catalytic activity">
    <reaction evidence="1">
        <text>2-deoxy-alpha-D-ribose 1-phosphate = 2-deoxy-D-ribose 5-phosphate</text>
        <dbReference type="Rhea" id="RHEA:27658"/>
        <dbReference type="ChEBI" id="CHEBI:57259"/>
        <dbReference type="ChEBI" id="CHEBI:62877"/>
        <dbReference type="EC" id="5.4.2.7"/>
    </reaction>
</comment>
<comment type="catalytic activity">
    <reaction evidence="1">
        <text>alpha-D-ribose 1-phosphate = D-ribose 5-phosphate</text>
        <dbReference type="Rhea" id="RHEA:18793"/>
        <dbReference type="ChEBI" id="CHEBI:57720"/>
        <dbReference type="ChEBI" id="CHEBI:78346"/>
        <dbReference type="EC" id="5.4.2.7"/>
    </reaction>
</comment>
<comment type="cofactor">
    <cofactor evidence="1">
        <name>Mn(2+)</name>
        <dbReference type="ChEBI" id="CHEBI:29035"/>
    </cofactor>
    <text evidence="1">Binds 2 manganese ions.</text>
</comment>
<comment type="pathway">
    <text evidence="1">Carbohydrate degradation; 2-deoxy-D-ribose 1-phosphate degradation; D-glyceraldehyde 3-phosphate and acetaldehyde from 2-deoxy-alpha-D-ribose 1-phosphate: step 1/2.</text>
</comment>
<comment type="subcellular location">
    <subcellularLocation>
        <location evidence="1">Cytoplasm</location>
    </subcellularLocation>
</comment>
<comment type="similarity">
    <text evidence="1">Belongs to the phosphopentomutase family.</text>
</comment>
<organism>
    <name type="scientific">Escherichia coli (strain K12 / DH10B)</name>
    <dbReference type="NCBI Taxonomy" id="316385"/>
    <lineage>
        <taxon>Bacteria</taxon>
        <taxon>Pseudomonadati</taxon>
        <taxon>Pseudomonadota</taxon>
        <taxon>Gammaproteobacteria</taxon>
        <taxon>Enterobacterales</taxon>
        <taxon>Enterobacteriaceae</taxon>
        <taxon>Escherichia</taxon>
    </lineage>
</organism>
<gene>
    <name evidence="1" type="primary">deoB</name>
    <name type="ordered locus">ECDH10B_4541</name>
</gene>
<dbReference type="EC" id="5.4.2.7" evidence="1"/>
<dbReference type="EMBL" id="CP000948">
    <property type="protein sequence ID" value="ACB05311.1"/>
    <property type="molecule type" value="Genomic_DNA"/>
</dbReference>
<dbReference type="RefSeq" id="WP_000816471.1">
    <property type="nucleotide sequence ID" value="NC_010473.1"/>
</dbReference>
<dbReference type="SMR" id="B1XFJ3"/>
<dbReference type="GeneID" id="89519362"/>
<dbReference type="KEGG" id="ecd:ECDH10B_4541"/>
<dbReference type="HOGENOM" id="CLU_053861_0_0_6"/>
<dbReference type="UniPathway" id="UPA00002">
    <property type="reaction ID" value="UER00467"/>
</dbReference>
<dbReference type="GO" id="GO:0005829">
    <property type="term" value="C:cytosol"/>
    <property type="evidence" value="ECO:0007669"/>
    <property type="project" value="TreeGrafter"/>
</dbReference>
<dbReference type="GO" id="GO:0000287">
    <property type="term" value="F:magnesium ion binding"/>
    <property type="evidence" value="ECO:0007669"/>
    <property type="project" value="InterPro"/>
</dbReference>
<dbReference type="GO" id="GO:0030145">
    <property type="term" value="F:manganese ion binding"/>
    <property type="evidence" value="ECO:0007669"/>
    <property type="project" value="UniProtKB-UniRule"/>
</dbReference>
<dbReference type="GO" id="GO:0008973">
    <property type="term" value="F:phosphopentomutase activity"/>
    <property type="evidence" value="ECO:0007669"/>
    <property type="project" value="UniProtKB-UniRule"/>
</dbReference>
<dbReference type="GO" id="GO:0006018">
    <property type="term" value="P:2-deoxyribose 1-phosphate catabolic process"/>
    <property type="evidence" value="ECO:0007669"/>
    <property type="project" value="UniProtKB-UniRule"/>
</dbReference>
<dbReference type="GO" id="GO:0006015">
    <property type="term" value="P:5-phosphoribose 1-diphosphate biosynthetic process"/>
    <property type="evidence" value="ECO:0007669"/>
    <property type="project" value="UniProtKB-UniPathway"/>
</dbReference>
<dbReference type="GO" id="GO:0043094">
    <property type="term" value="P:metabolic compound salvage"/>
    <property type="evidence" value="ECO:0007669"/>
    <property type="project" value="InterPro"/>
</dbReference>
<dbReference type="GO" id="GO:0009117">
    <property type="term" value="P:nucleotide metabolic process"/>
    <property type="evidence" value="ECO:0007669"/>
    <property type="project" value="InterPro"/>
</dbReference>
<dbReference type="CDD" id="cd16009">
    <property type="entry name" value="PPM"/>
    <property type="match status" value="1"/>
</dbReference>
<dbReference type="FunFam" id="3.30.70.1250:FF:000001">
    <property type="entry name" value="Phosphopentomutase"/>
    <property type="match status" value="1"/>
</dbReference>
<dbReference type="Gene3D" id="3.40.720.10">
    <property type="entry name" value="Alkaline Phosphatase, subunit A"/>
    <property type="match status" value="1"/>
</dbReference>
<dbReference type="Gene3D" id="3.30.70.1250">
    <property type="entry name" value="Phosphopentomutase"/>
    <property type="match status" value="1"/>
</dbReference>
<dbReference type="HAMAP" id="MF_00740">
    <property type="entry name" value="Phosphopentomut"/>
    <property type="match status" value="1"/>
</dbReference>
<dbReference type="InterPro" id="IPR017850">
    <property type="entry name" value="Alkaline_phosphatase_core_sf"/>
</dbReference>
<dbReference type="InterPro" id="IPR010045">
    <property type="entry name" value="DeoB"/>
</dbReference>
<dbReference type="InterPro" id="IPR006124">
    <property type="entry name" value="Metalloenzyme"/>
</dbReference>
<dbReference type="InterPro" id="IPR024052">
    <property type="entry name" value="Phosphopentomutase_DeoB_cap_sf"/>
</dbReference>
<dbReference type="NCBIfam" id="TIGR01696">
    <property type="entry name" value="deoB"/>
    <property type="match status" value="1"/>
</dbReference>
<dbReference type="NCBIfam" id="NF003766">
    <property type="entry name" value="PRK05362.1"/>
    <property type="match status" value="1"/>
</dbReference>
<dbReference type="PANTHER" id="PTHR21110">
    <property type="entry name" value="PHOSPHOPENTOMUTASE"/>
    <property type="match status" value="1"/>
</dbReference>
<dbReference type="PANTHER" id="PTHR21110:SF0">
    <property type="entry name" value="PHOSPHOPENTOMUTASE"/>
    <property type="match status" value="1"/>
</dbReference>
<dbReference type="Pfam" id="PF01676">
    <property type="entry name" value="Metalloenzyme"/>
    <property type="match status" value="1"/>
</dbReference>
<dbReference type="PIRSF" id="PIRSF001491">
    <property type="entry name" value="Ppentomutase"/>
    <property type="match status" value="1"/>
</dbReference>
<dbReference type="SUPFAM" id="SSF53649">
    <property type="entry name" value="Alkaline phosphatase-like"/>
    <property type="match status" value="1"/>
</dbReference>
<dbReference type="SUPFAM" id="SSF143856">
    <property type="entry name" value="DeoB insert domain-like"/>
    <property type="match status" value="1"/>
</dbReference>
<accession>B1XFJ3</accession>
<reference key="1">
    <citation type="journal article" date="2008" name="J. Bacteriol.">
        <title>The complete genome sequence of Escherichia coli DH10B: insights into the biology of a laboratory workhorse.</title>
        <authorList>
            <person name="Durfee T."/>
            <person name="Nelson R."/>
            <person name="Baldwin S."/>
            <person name="Plunkett G. III"/>
            <person name="Burland V."/>
            <person name="Mau B."/>
            <person name="Petrosino J.F."/>
            <person name="Qin X."/>
            <person name="Muzny D.M."/>
            <person name="Ayele M."/>
            <person name="Gibbs R.A."/>
            <person name="Csorgo B."/>
            <person name="Posfai G."/>
            <person name="Weinstock G.M."/>
            <person name="Blattner F.R."/>
        </authorList>
    </citation>
    <scope>NUCLEOTIDE SEQUENCE [LARGE SCALE GENOMIC DNA]</scope>
    <source>
        <strain>K12 / DH10B</strain>
    </source>
</reference>
<name>DEOB_ECODH</name>
<protein>
    <recommendedName>
        <fullName evidence="1">Phosphopentomutase</fullName>
        <ecNumber evidence="1">5.4.2.7</ecNumber>
    </recommendedName>
    <alternativeName>
        <fullName evidence="1">Phosphodeoxyribomutase</fullName>
    </alternativeName>
</protein>
<feature type="chain" id="PRO_1000133072" description="Phosphopentomutase">
    <location>
        <begin position="1"/>
        <end position="407"/>
    </location>
</feature>
<feature type="binding site" evidence="1">
    <location>
        <position position="10"/>
    </location>
    <ligand>
        <name>Mn(2+)</name>
        <dbReference type="ChEBI" id="CHEBI:29035"/>
        <label>1</label>
    </ligand>
</feature>
<feature type="binding site" evidence="1">
    <location>
        <position position="306"/>
    </location>
    <ligand>
        <name>Mn(2+)</name>
        <dbReference type="ChEBI" id="CHEBI:29035"/>
        <label>2</label>
    </ligand>
</feature>
<feature type="binding site" evidence="1">
    <location>
        <position position="311"/>
    </location>
    <ligand>
        <name>Mn(2+)</name>
        <dbReference type="ChEBI" id="CHEBI:29035"/>
        <label>2</label>
    </ligand>
</feature>
<feature type="binding site" evidence="1">
    <location>
        <position position="347"/>
    </location>
    <ligand>
        <name>Mn(2+)</name>
        <dbReference type="ChEBI" id="CHEBI:29035"/>
        <label>1</label>
    </ligand>
</feature>
<feature type="binding site" evidence="1">
    <location>
        <position position="348"/>
    </location>
    <ligand>
        <name>Mn(2+)</name>
        <dbReference type="ChEBI" id="CHEBI:29035"/>
        <label>1</label>
    </ligand>
</feature>
<feature type="binding site" evidence="1">
    <location>
        <position position="359"/>
    </location>
    <ligand>
        <name>Mn(2+)</name>
        <dbReference type="ChEBI" id="CHEBI:29035"/>
        <label>2</label>
    </ligand>
</feature>
<keyword id="KW-0963">Cytoplasm</keyword>
<keyword id="KW-0413">Isomerase</keyword>
<keyword id="KW-0464">Manganese</keyword>
<keyword id="KW-0479">Metal-binding</keyword>
<evidence type="ECO:0000255" key="1">
    <source>
        <dbReference type="HAMAP-Rule" id="MF_00740"/>
    </source>
</evidence>
<sequence>MKRAFIMVLDSFGIGATEDAERFGDVGADTLGHIAEACAKGEADNGRKGPLNLPNLTRLGLAKAHEGSTGFIPAGMDGNAEVIGAYAWAHEMSSGKDTPSGHWEIAGVPVLFEWGYFSDHENSFPQELLDKLVERANLPGYLGNCHSSGTVILDQLGEEHMKTGKPIFYTSADSVFQIACHEETFGLDKLYELCEIAREELTNGGYNIGRVIARPFIGDKAGNFQRTGNRHDLAVEPPAPTVLQKLVDEKHGQVVSVGKIADIYANCGITKKVKATGLDALFDATIKEMKEAGDNTIVFTNFVDFDSSWGHRRDVAGYAAGLELFDRRLPELMSLLRDDDILILTADHGCDPTWTGTDHTREHIPVLVYGPKVKPGSLGHRETFADIGQTLAKYFGTSDMEYGKAMF</sequence>